<reference key="1">
    <citation type="journal article" date="2004" name="Nature">
        <title>Genome sequence of Silicibacter pomeroyi reveals adaptations to the marine environment.</title>
        <authorList>
            <person name="Moran M.A."/>
            <person name="Buchan A."/>
            <person name="Gonzalez J.M."/>
            <person name="Heidelberg J.F."/>
            <person name="Whitman W.B."/>
            <person name="Kiene R.P."/>
            <person name="Henriksen J.R."/>
            <person name="King G.M."/>
            <person name="Belas R."/>
            <person name="Fuqua C."/>
            <person name="Brinkac L.M."/>
            <person name="Lewis M."/>
            <person name="Johri S."/>
            <person name="Weaver B."/>
            <person name="Pai G."/>
            <person name="Eisen J.A."/>
            <person name="Rahe E."/>
            <person name="Sheldon W.M."/>
            <person name="Ye W."/>
            <person name="Miller T.R."/>
            <person name="Carlton J."/>
            <person name="Rasko D.A."/>
            <person name="Paulsen I.T."/>
            <person name="Ren Q."/>
            <person name="Daugherty S.C."/>
            <person name="DeBoy R.T."/>
            <person name="Dodson R.J."/>
            <person name="Durkin A.S."/>
            <person name="Madupu R."/>
            <person name="Nelson W.C."/>
            <person name="Sullivan S.A."/>
            <person name="Rosovitz M.J."/>
            <person name="Haft D.H."/>
            <person name="Selengut J."/>
            <person name="Ward N."/>
        </authorList>
    </citation>
    <scope>NUCLEOTIDE SEQUENCE [LARGE SCALE GENOMIC DNA]</scope>
    <source>
        <strain>ATCC 700808 / DSM 15171 / DSS-3</strain>
    </source>
</reference>
<reference key="2">
    <citation type="journal article" date="2014" name="Stand. Genomic Sci.">
        <title>An updated genome annotation for the model marine bacterium Ruegeria pomeroyi DSS-3.</title>
        <authorList>
            <person name="Rivers A.R."/>
            <person name="Smith C.B."/>
            <person name="Moran M.A."/>
        </authorList>
    </citation>
    <scope>GENOME REANNOTATION</scope>
    <source>
        <strain>ATCC 700808 / DSM 15171 / DSS-3</strain>
    </source>
</reference>
<evidence type="ECO:0000255" key="1">
    <source>
        <dbReference type="HAMAP-Rule" id="MF_01374"/>
    </source>
</evidence>
<keyword id="KW-0378">Hydrolase</keyword>
<keyword id="KW-0479">Metal-binding</keyword>
<keyword id="KW-1185">Reference proteome</keyword>
<keyword id="KW-0862">Zinc</keyword>
<comment type="function">
    <text evidence="1">Thiolesterase that catalyzes the hydrolysis of S-D-lactoyl-glutathione to form glutathione and D-lactic acid.</text>
</comment>
<comment type="catalytic activity">
    <reaction evidence="1">
        <text>an S-(2-hydroxyacyl)glutathione + H2O = a 2-hydroxy carboxylate + glutathione + H(+)</text>
        <dbReference type="Rhea" id="RHEA:21864"/>
        <dbReference type="ChEBI" id="CHEBI:15377"/>
        <dbReference type="ChEBI" id="CHEBI:15378"/>
        <dbReference type="ChEBI" id="CHEBI:57925"/>
        <dbReference type="ChEBI" id="CHEBI:58896"/>
        <dbReference type="ChEBI" id="CHEBI:71261"/>
        <dbReference type="EC" id="3.1.2.6"/>
    </reaction>
</comment>
<comment type="cofactor">
    <cofactor evidence="1">
        <name>Zn(2+)</name>
        <dbReference type="ChEBI" id="CHEBI:29105"/>
    </cofactor>
    <text evidence="1">Binds 2 Zn(2+) ions per subunit.</text>
</comment>
<comment type="pathway">
    <text evidence="1">Secondary metabolite metabolism; methylglyoxal degradation; (R)-lactate from methylglyoxal: step 2/2.</text>
</comment>
<comment type="subunit">
    <text evidence="1">Monomer.</text>
</comment>
<comment type="similarity">
    <text evidence="1">Belongs to the metallo-beta-lactamase superfamily. Glyoxalase II family.</text>
</comment>
<feature type="chain" id="PRO_0000309710" description="Hydroxyacylglutathione hydrolase">
    <location>
        <begin position="1"/>
        <end position="255"/>
    </location>
</feature>
<feature type="binding site" evidence="1">
    <location>
        <position position="56"/>
    </location>
    <ligand>
        <name>Zn(2+)</name>
        <dbReference type="ChEBI" id="CHEBI:29105"/>
        <label>1</label>
    </ligand>
</feature>
<feature type="binding site" evidence="1">
    <location>
        <position position="58"/>
    </location>
    <ligand>
        <name>Zn(2+)</name>
        <dbReference type="ChEBI" id="CHEBI:29105"/>
        <label>1</label>
    </ligand>
</feature>
<feature type="binding site" evidence="1">
    <location>
        <position position="60"/>
    </location>
    <ligand>
        <name>Zn(2+)</name>
        <dbReference type="ChEBI" id="CHEBI:29105"/>
        <label>2</label>
    </ligand>
</feature>
<feature type="binding site" evidence="1">
    <location>
        <position position="61"/>
    </location>
    <ligand>
        <name>Zn(2+)</name>
        <dbReference type="ChEBI" id="CHEBI:29105"/>
        <label>2</label>
    </ligand>
</feature>
<feature type="binding site" evidence="1">
    <location>
        <position position="114"/>
    </location>
    <ligand>
        <name>Zn(2+)</name>
        <dbReference type="ChEBI" id="CHEBI:29105"/>
        <label>1</label>
    </ligand>
</feature>
<feature type="binding site" evidence="1">
    <location>
        <position position="133"/>
    </location>
    <ligand>
        <name>Zn(2+)</name>
        <dbReference type="ChEBI" id="CHEBI:29105"/>
        <label>1</label>
    </ligand>
</feature>
<feature type="binding site" evidence="1">
    <location>
        <position position="133"/>
    </location>
    <ligand>
        <name>Zn(2+)</name>
        <dbReference type="ChEBI" id="CHEBI:29105"/>
        <label>2</label>
    </ligand>
</feature>
<feature type="binding site" evidence="1">
    <location>
        <position position="171"/>
    </location>
    <ligand>
        <name>Zn(2+)</name>
        <dbReference type="ChEBI" id="CHEBI:29105"/>
        <label>2</label>
    </ligand>
</feature>
<sequence length="255" mass="27513">MPLEIVTVPCLSDNYAYLIHDADAGKTALVDAPEAAPIQSELDRRGWSLDQVWLTHHHWDHVDGLAALRDRYKPTVIGAEADAHRLPPLDLAVSEGDRFDLGGAPVEVLDVSGHTVGHIAFHLPTGKAVFTADSLMALGCGRLFEGTPDQMWASLSKLAALPDDTLVCSGHEYTQSNARFALSVDPDNAALKTRAAEIDQARAEGRPTVPSLLSLEKSTNPFLRAADPGIQSLLGMQGADPARVFAEIRARKDHF</sequence>
<dbReference type="EC" id="3.1.2.6" evidence="1"/>
<dbReference type="EMBL" id="CP000031">
    <property type="protein sequence ID" value="AAV96403.1"/>
    <property type="molecule type" value="Genomic_DNA"/>
</dbReference>
<dbReference type="RefSeq" id="WP_011048858.1">
    <property type="nucleotide sequence ID" value="NC_003911.12"/>
</dbReference>
<dbReference type="SMR" id="Q5LNN5"/>
<dbReference type="STRING" id="246200.SPO3168"/>
<dbReference type="PaxDb" id="246200-SPO3168"/>
<dbReference type="KEGG" id="sil:SPO3168"/>
<dbReference type="eggNOG" id="COG0491">
    <property type="taxonomic scope" value="Bacteria"/>
</dbReference>
<dbReference type="HOGENOM" id="CLU_030571_4_1_5"/>
<dbReference type="UniPathway" id="UPA00619">
    <property type="reaction ID" value="UER00676"/>
</dbReference>
<dbReference type="Proteomes" id="UP000001023">
    <property type="component" value="Chromosome"/>
</dbReference>
<dbReference type="GO" id="GO:0004416">
    <property type="term" value="F:hydroxyacylglutathione hydrolase activity"/>
    <property type="evidence" value="ECO:0007669"/>
    <property type="project" value="UniProtKB-UniRule"/>
</dbReference>
<dbReference type="GO" id="GO:0046872">
    <property type="term" value="F:metal ion binding"/>
    <property type="evidence" value="ECO:0007669"/>
    <property type="project" value="UniProtKB-KW"/>
</dbReference>
<dbReference type="GO" id="GO:0019243">
    <property type="term" value="P:methylglyoxal catabolic process to D-lactate via S-lactoyl-glutathione"/>
    <property type="evidence" value="ECO:0007669"/>
    <property type="project" value="InterPro"/>
</dbReference>
<dbReference type="CDD" id="cd07723">
    <property type="entry name" value="hydroxyacylglutathione_hydrolase_MBL-fold"/>
    <property type="match status" value="1"/>
</dbReference>
<dbReference type="FunFam" id="3.60.15.10:FF:000019">
    <property type="entry name" value="Hydroxyacylglutathione hydrolase, mitochondrial"/>
    <property type="match status" value="1"/>
</dbReference>
<dbReference type="Gene3D" id="3.60.15.10">
    <property type="entry name" value="Ribonuclease Z/Hydroxyacylglutathione hydrolase-like"/>
    <property type="match status" value="1"/>
</dbReference>
<dbReference type="HAMAP" id="MF_01374">
    <property type="entry name" value="Glyoxalase_2"/>
    <property type="match status" value="1"/>
</dbReference>
<dbReference type="InterPro" id="IPR035680">
    <property type="entry name" value="Clx_II_MBL"/>
</dbReference>
<dbReference type="InterPro" id="IPR050110">
    <property type="entry name" value="Glyoxalase_II_hydrolase"/>
</dbReference>
<dbReference type="InterPro" id="IPR032282">
    <property type="entry name" value="HAGH_C"/>
</dbReference>
<dbReference type="InterPro" id="IPR017782">
    <property type="entry name" value="Hydroxyacylglutathione_Hdrlase"/>
</dbReference>
<dbReference type="InterPro" id="IPR001279">
    <property type="entry name" value="Metallo-B-lactamas"/>
</dbReference>
<dbReference type="InterPro" id="IPR036866">
    <property type="entry name" value="RibonucZ/Hydroxyglut_hydro"/>
</dbReference>
<dbReference type="NCBIfam" id="TIGR03413">
    <property type="entry name" value="GSH_gloB"/>
    <property type="match status" value="1"/>
</dbReference>
<dbReference type="PANTHER" id="PTHR43705">
    <property type="entry name" value="HYDROXYACYLGLUTATHIONE HYDROLASE"/>
    <property type="match status" value="1"/>
</dbReference>
<dbReference type="PANTHER" id="PTHR43705:SF1">
    <property type="entry name" value="HYDROXYACYLGLUTATHIONE HYDROLASE GLOB"/>
    <property type="match status" value="1"/>
</dbReference>
<dbReference type="Pfam" id="PF16123">
    <property type="entry name" value="HAGH_C"/>
    <property type="match status" value="1"/>
</dbReference>
<dbReference type="Pfam" id="PF00753">
    <property type="entry name" value="Lactamase_B"/>
    <property type="match status" value="1"/>
</dbReference>
<dbReference type="PIRSF" id="PIRSF005457">
    <property type="entry name" value="Glx"/>
    <property type="match status" value="1"/>
</dbReference>
<dbReference type="SMART" id="SM00849">
    <property type="entry name" value="Lactamase_B"/>
    <property type="match status" value="1"/>
</dbReference>
<dbReference type="SUPFAM" id="SSF56281">
    <property type="entry name" value="Metallo-hydrolase/oxidoreductase"/>
    <property type="match status" value="1"/>
</dbReference>
<gene>
    <name evidence="1" type="primary">gloB</name>
    <name type="ordered locus">SPO3168</name>
</gene>
<name>GLO2_RUEPO</name>
<protein>
    <recommendedName>
        <fullName evidence="1">Hydroxyacylglutathione hydrolase</fullName>
        <ecNumber evidence="1">3.1.2.6</ecNumber>
    </recommendedName>
    <alternativeName>
        <fullName evidence="1">Glyoxalase II</fullName>
        <shortName evidence="1">Glx II</shortName>
    </alternativeName>
</protein>
<proteinExistence type="inferred from homology"/>
<organism>
    <name type="scientific">Ruegeria pomeroyi (strain ATCC 700808 / DSM 15171 / DSS-3)</name>
    <name type="common">Silicibacter pomeroyi</name>
    <dbReference type="NCBI Taxonomy" id="246200"/>
    <lineage>
        <taxon>Bacteria</taxon>
        <taxon>Pseudomonadati</taxon>
        <taxon>Pseudomonadota</taxon>
        <taxon>Alphaproteobacteria</taxon>
        <taxon>Rhodobacterales</taxon>
        <taxon>Roseobacteraceae</taxon>
        <taxon>Ruegeria</taxon>
    </lineage>
</organism>
<accession>Q5LNN5</accession>